<name>SYI_STUS1</name>
<comment type="function">
    <text evidence="1">Catalyzes the attachment of isoleucine to tRNA(Ile). As IleRS can inadvertently accommodate and process structurally similar amino acids such as valine, to avoid such errors it has two additional distinct tRNA(Ile)-dependent editing activities. One activity is designated as 'pretransfer' editing and involves the hydrolysis of activated Val-AMP. The other activity is designated 'posttransfer' editing and involves deacylation of mischarged Val-tRNA(Ile).</text>
</comment>
<comment type="catalytic activity">
    <reaction evidence="1">
        <text>tRNA(Ile) + L-isoleucine + ATP = L-isoleucyl-tRNA(Ile) + AMP + diphosphate</text>
        <dbReference type="Rhea" id="RHEA:11060"/>
        <dbReference type="Rhea" id="RHEA-COMP:9666"/>
        <dbReference type="Rhea" id="RHEA-COMP:9695"/>
        <dbReference type="ChEBI" id="CHEBI:30616"/>
        <dbReference type="ChEBI" id="CHEBI:33019"/>
        <dbReference type="ChEBI" id="CHEBI:58045"/>
        <dbReference type="ChEBI" id="CHEBI:78442"/>
        <dbReference type="ChEBI" id="CHEBI:78528"/>
        <dbReference type="ChEBI" id="CHEBI:456215"/>
        <dbReference type="EC" id="6.1.1.5"/>
    </reaction>
</comment>
<comment type="cofactor">
    <cofactor evidence="1">
        <name>Zn(2+)</name>
        <dbReference type="ChEBI" id="CHEBI:29105"/>
    </cofactor>
    <text evidence="1">Binds 1 zinc ion per subunit.</text>
</comment>
<comment type="subunit">
    <text evidence="1">Monomer.</text>
</comment>
<comment type="subcellular location">
    <subcellularLocation>
        <location evidence="1">Cytoplasm</location>
    </subcellularLocation>
</comment>
<comment type="domain">
    <text evidence="1">IleRS has two distinct active sites: one for aminoacylation and one for editing. The misactivated valine is translocated from the active site to the editing site, which sterically excludes the correctly activated isoleucine. The single editing site contains two valyl binding pockets, one specific for each substrate (Val-AMP or Val-tRNA(Ile)).</text>
</comment>
<comment type="similarity">
    <text evidence="1">Belongs to the class-I aminoacyl-tRNA synthetase family. IleS type 1 subfamily.</text>
</comment>
<gene>
    <name evidence="1" type="primary">ileS</name>
    <name type="ordered locus">PST_0964</name>
</gene>
<feature type="chain" id="PRO_1000022109" description="Isoleucine--tRNA ligase">
    <location>
        <begin position="1"/>
        <end position="943"/>
    </location>
</feature>
<feature type="short sequence motif" description="'HIGH' region">
    <location>
        <begin position="58"/>
        <end position="68"/>
    </location>
</feature>
<feature type="short sequence motif" description="'KMSKS' region">
    <location>
        <begin position="608"/>
        <end position="612"/>
    </location>
</feature>
<feature type="binding site" evidence="1">
    <location>
        <position position="567"/>
    </location>
    <ligand>
        <name>L-isoleucyl-5'-AMP</name>
        <dbReference type="ChEBI" id="CHEBI:178002"/>
    </ligand>
</feature>
<feature type="binding site" evidence="1">
    <location>
        <position position="611"/>
    </location>
    <ligand>
        <name>ATP</name>
        <dbReference type="ChEBI" id="CHEBI:30616"/>
    </ligand>
</feature>
<feature type="binding site" evidence="1">
    <location>
        <position position="906"/>
    </location>
    <ligand>
        <name>Zn(2+)</name>
        <dbReference type="ChEBI" id="CHEBI:29105"/>
    </ligand>
</feature>
<feature type="binding site" evidence="1">
    <location>
        <position position="909"/>
    </location>
    <ligand>
        <name>Zn(2+)</name>
        <dbReference type="ChEBI" id="CHEBI:29105"/>
    </ligand>
</feature>
<feature type="binding site" evidence="1">
    <location>
        <position position="926"/>
    </location>
    <ligand>
        <name>Zn(2+)</name>
        <dbReference type="ChEBI" id="CHEBI:29105"/>
    </ligand>
</feature>
<feature type="binding site" evidence="1">
    <location>
        <position position="929"/>
    </location>
    <ligand>
        <name>Zn(2+)</name>
        <dbReference type="ChEBI" id="CHEBI:29105"/>
    </ligand>
</feature>
<dbReference type="EC" id="6.1.1.5" evidence="1"/>
<dbReference type="EMBL" id="CP000304">
    <property type="protein sequence ID" value="ABP78661.1"/>
    <property type="molecule type" value="Genomic_DNA"/>
</dbReference>
<dbReference type="RefSeq" id="WP_011912152.1">
    <property type="nucleotide sequence ID" value="NC_009434.1"/>
</dbReference>
<dbReference type="SMR" id="A4VI60"/>
<dbReference type="KEGG" id="psa:PST_0964"/>
<dbReference type="eggNOG" id="COG0060">
    <property type="taxonomic scope" value="Bacteria"/>
</dbReference>
<dbReference type="HOGENOM" id="CLU_001493_7_1_6"/>
<dbReference type="Proteomes" id="UP000000233">
    <property type="component" value="Chromosome"/>
</dbReference>
<dbReference type="GO" id="GO:0005829">
    <property type="term" value="C:cytosol"/>
    <property type="evidence" value="ECO:0007669"/>
    <property type="project" value="TreeGrafter"/>
</dbReference>
<dbReference type="GO" id="GO:0002161">
    <property type="term" value="F:aminoacyl-tRNA deacylase activity"/>
    <property type="evidence" value="ECO:0007669"/>
    <property type="project" value="InterPro"/>
</dbReference>
<dbReference type="GO" id="GO:0005524">
    <property type="term" value="F:ATP binding"/>
    <property type="evidence" value="ECO:0007669"/>
    <property type="project" value="UniProtKB-UniRule"/>
</dbReference>
<dbReference type="GO" id="GO:0004822">
    <property type="term" value="F:isoleucine-tRNA ligase activity"/>
    <property type="evidence" value="ECO:0007669"/>
    <property type="project" value="UniProtKB-UniRule"/>
</dbReference>
<dbReference type="GO" id="GO:0000049">
    <property type="term" value="F:tRNA binding"/>
    <property type="evidence" value="ECO:0007669"/>
    <property type="project" value="InterPro"/>
</dbReference>
<dbReference type="GO" id="GO:0008270">
    <property type="term" value="F:zinc ion binding"/>
    <property type="evidence" value="ECO:0007669"/>
    <property type="project" value="UniProtKB-UniRule"/>
</dbReference>
<dbReference type="GO" id="GO:0006428">
    <property type="term" value="P:isoleucyl-tRNA aminoacylation"/>
    <property type="evidence" value="ECO:0007669"/>
    <property type="project" value="UniProtKB-UniRule"/>
</dbReference>
<dbReference type="CDD" id="cd07960">
    <property type="entry name" value="Anticodon_Ia_Ile_BEm"/>
    <property type="match status" value="1"/>
</dbReference>
<dbReference type="CDD" id="cd00818">
    <property type="entry name" value="IleRS_core"/>
    <property type="match status" value="1"/>
</dbReference>
<dbReference type="FunFam" id="1.10.730.20:FF:000001">
    <property type="entry name" value="Isoleucine--tRNA ligase"/>
    <property type="match status" value="1"/>
</dbReference>
<dbReference type="FunFam" id="3.40.50.620:FF:000042">
    <property type="entry name" value="Isoleucine--tRNA ligase"/>
    <property type="match status" value="1"/>
</dbReference>
<dbReference type="FunFam" id="3.40.50.620:FF:000048">
    <property type="entry name" value="Isoleucine--tRNA ligase"/>
    <property type="match status" value="1"/>
</dbReference>
<dbReference type="Gene3D" id="1.10.730.20">
    <property type="match status" value="1"/>
</dbReference>
<dbReference type="Gene3D" id="3.40.50.620">
    <property type="entry name" value="HUPs"/>
    <property type="match status" value="2"/>
</dbReference>
<dbReference type="Gene3D" id="3.90.740.10">
    <property type="entry name" value="Valyl/Leucyl/Isoleucyl-tRNA synthetase, editing domain"/>
    <property type="match status" value="1"/>
</dbReference>
<dbReference type="HAMAP" id="MF_02002">
    <property type="entry name" value="Ile_tRNA_synth_type1"/>
    <property type="match status" value="1"/>
</dbReference>
<dbReference type="InterPro" id="IPR001412">
    <property type="entry name" value="aa-tRNA-synth_I_CS"/>
</dbReference>
<dbReference type="InterPro" id="IPR002300">
    <property type="entry name" value="aa-tRNA-synth_Ia"/>
</dbReference>
<dbReference type="InterPro" id="IPR033708">
    <property type="entry name" value="Anticodon_Ile_BEm"/>
</dbReference>
<dbReference type="InterPro" id="IPR002301">
    <property type="entry name" value="Ile-tRNA-ligase"/>
</dbReference>
<dbReference type="InterPro" id="IPR023585">
    <property type="entry name" value="Ile-tRNA-ligase_type1"/>
</dbReference>
<dbReference type="InterPro" id="IPR050081">
    <property type="entry name" value="Ile-tRNA_ligase"/>
</dbReference>
<dbReference type="InterPro" id="IPR013155">
    <property type="entry name" value="M/V/L/I-tRNA-synth_anticd-bd"/>
</dbReference>
<dbReference type="InterPro" id="IPR014729">
    <property type="entry name" value="Rossmann-like_a/b/a_fold"/>
</dbReference>
<dbReference type="InterPro" id="IPR009080">
    <property type="entry name" value="tRNAsynth_Ia_anticodon-bd"/>
</dbReference>
<dbReference type="InterPro" id="IPR009008">
    <property type="entry name" value="Val/Leu/Ile-tRNA-synth_edit"/>
</dbReference>
<dbReference type="InterPro" id="IPR010663">
    <property type="entry name" value="Znf_FPG/IleRS"/>
</dbReference>
<dbReference type="NCBIfam" id="TIGR00392">
    <property type="entry name" value="ileS"/>
    <property type="match status" value="1"/>
</dbReference>
<dbReference type="PANTHER" id="PTHR42765:SF1">
    <property type="entry name" value="ISOLEUCINE--TRNA LIGASE, MITOCHONDRIAL"/>
    <property type="match status" value="1"/>
</dbReference>
<dbReference type="PANTHER" id="PTHR42765">
    <property type="entry name" value="SOLEUCYL-TRNA SYNTHETASE"/>
    <property type="match status" value="1"/>
</dbReference>
<dbReference type="Pfam" id="PF08264">
    <property type="entry name" value="Anticodon_1"/>
    <property type="match status" value="1"/>
</dbReference>
<dbReference type="Pfam" id="PF00133">
    <property type="entry name" value="tRNA-synt_1"/>
    <property type="match status" value="1"/>
</dbReference>
<dbReference type="Pfam" id="PF06827">
    <property type="entry name" value="zf-FPG_IleRS"/>
    <property type="match status" value="1"/>
</dbReference>
<dbReference type="PRINTS" id="PR00984">
    <property type="entry name" value="TRNASYNTHILE"/>
</dbReference>
<dbReference type="SUPFAM" id="SSF47323">
    <property type="entry name" value="Anticodon-binding domain of a subclass of class I aminoacyl-tRNA synthetases"/>
    <property type="match status" value="1"/>
</dbReference>
<dbReference type="SUPFAM" id="SSF52374">
    <property type="entry name" value="Nucleotidylyl transferase"/>
    <property type="match status" value="1"/>
</dbReference>
<dbReference type="SUPFAM" id="SSF50677">
    <property type="entry name" value="ValRS/IleRS/LeuRS editing domain"/>
    <property type="match status" value="1"/>
</dbReference>
<dbReference type="PROSITE" id="PS00178">
    <property type="entry name" value="AA_TRNA_LIGASE_I"/>
    <property type="match status" value="1"/>
</dbReference>
<proteinExistence type="inferred from homology"/>
<accession>A4VI60</accession>
<organism>
    <name type="scientific">Stutzerimonas stutzeri (strain A1501)</name>
    <name type="common">Pseudomonas stutzeri</name>
    <dbReference type="NCBI Taxonomy" id="379731"/>
    <lineage>
        <taxon>Bacteria</taxon>
        <taxon>Pseudomonadati</taxon>
        <taxon>Pseudomonadota</taxon>
        <taxon>Gammaproteobacteria</taxon>
        <taxon>Pseudomonadales</taxon>
        <taxon>Pseudomonadaceae</taxon>
        <taxon>Stutzerimonas</taxon>
    </lineage>
</organism>
<keyword id="KW-0030">Aminoacyl-tRNA synthetase</keyword>
<keyword id="KW-0067">ATP-binding</keyword>
<keyword id="KW-0963">Cytoplasm</keyword>
<keyword id="KW-0436">Ligase</keyword>
<keyword id="KW-0479">Metal-binding</keyword>
<keyword id="KW-0547">Nucleotide-binding</keyword>
<keyword id="KW-0648">Protein biosynthesis</keyword>
<keyword id="KW-1185">Reference proteome</keyword>
<keyword id="KW-0862">Zinc</keyword>
<evidence type="ECO:0000255" key="1">
    <source>
        <dbReference type="HAMAP-Rule" id="MF_02002"/>
    </source>
</evidence>
<sequence>MTDYKATLNLPSTAFPMKAGLPQREPEILQRWNSIDLYRKLRQIGEGRPKFILHDGPPYANGNIHIGHAVNKVIKDMIVRSRTLAGFDAPYVPGWDCHGLPIEHKVETTFGKNQPADLTRERCRAYAAEQIEGQKADFIRLGVLGDWDNPYKTMDFANEAGEIRALAKMVEGGFVFKGLKPVNWCFDCGSALAEAEVEYQDKKSDAIDVAFDVEDADKLAAAFGLASLAKRASIVIWTTTPWTIPANQALNVHPEFVYALVDTGERLLVLAEELVESCLQRYGLAGEIIARCEGKALELIRFRHPFYERFAPVYLADYVETGAGTGIVHSAPAYGEDDFRSCKHYGMENDDILGPVQSNGVYVSDLPFFGGQFIWKANPAIVEKLAEVGALLKHESIQHSYMHCWRHKTPLIYRATAQWFVGMDKVAHDGSSLRRRALDAIEQTEFVPAWGQARLHGMIAGRPDWCISRQRTWGVPIPFFLHKESGELHPRTVELMEQVAQRVEQGGIEAWSKLDAAELLGDEAAQYEKITDTLDVWFDSGTTHWHVMRGSHPMGHEQGPRADLYLEGSDQHRGWFHSSLLTGAAIDGHAPYKGLLTHGFTVDENGRKMSKSLGNVIAPQEITDSMGADILRLWVSATDYSGEMAVSKQILQRSADAYRRIRNTARFLLSNLDGFDPAQHMAPNDQLIALDRWAIDRALLLQREIEEAYTTYKFWNVYQKVHNFCVQELGGFYLDIIKDRQYTTGADSLPRRSCQTALYHIAEALVRWIAPILAFTAEEIWQYLPGERNESVMLNTWYEGLAELPEGFELGRPFWDKVMEVKAAVNKELENQRNAKAIGGNLQAEVTLYAEESLAGELARLGSELRFVLITSAVDIAPLAQAPAEAVDSELAGLKLLVRKTEHSKCGRCWHHLPDVGSHAEHPEICGRCVENIEGAGEVRHYA</sequence>
<reference key="1">
    <citation type="journal article" date="2008" name="Proc. Natl. Acad. Sci. U.S.A.">
        <title>Nitrogen fixation island and rhizosphere competence traits in the genome of root-associated Pseudomonas stutzeri A1501.</title>
        <authorList>
            <person name="Yan Y."/>
            <person name="Yang J."/>
            <person name="Dou Y."/>
            <person name="Chen M."/>
            <person name="Ping S."/>
            <person name="Peng J."/>
            <person name="Lu W."/>
            <person name="Zhang W."/>
            <person name="Yao Z."/>
            <person name="Li H."/>
            <person name="Liu W."/>
            <person name="He S."/>
            <person name="Geng L."/>
            <person name="Zhang X."/>
            <person name="Yang F."/>
            <person name="Yu H."/>
            <person name="Zhan Y."/>
            <person name="Li D."/>
            <person name="Lin Z."/>
            <person name="Wang Y."/>
            <person name="Elmerich C."/>
            <person name="Lin M."/>
            <person name="Jin Q."/>
        </authorList>
    </citation>
    <scope>NUCLEOTIDE SEQUENCE [LARGE SCALE GENOMIC DNA]</scope>
    <source>
        <strain>A1501</strain>
    </source>
</reference>
<protein>
    <recommendedName>
        <fullName evidence="1">Isoleucine--tRNA ligase</fullName>
        <ecNumber evidence="1">6.1.1.5</ecNumber>
    </recommendedName>
    <alternativeName>
        <fullName evidence="1">Isoleucyl-tRNA synthetase</fullName>
        <shortName evidence="1">IleRS</shortName>
    </alternativeName>
</protein>